<proteinExistence type="inferred from homology"/>
<reference key="1">
    <citation type="journal article" date="2003" name="J. Virol.">
        <title>Complete genomic sequence and comparative analysis of the tumorigenic poxvirus Yaba monkey tumor virus.</title>
        <authorList>
            <person name="Brunetti C.R."/>
            <person name="Amano H."/>
            <person name="Ueda Y."/>
            <person name="Qin J."/>
            <person name="Miyamura T."/>
            <person name="Suzuki T."/>
            <person name="Li X."/>
            <person name="Barrett J.W."/>
            <person name="McFadden G."/>
        </authorList>
    </citation>
    <scope>NUCLEOTIDE SEQUENCE [LARGE SCALE GENOMIC DNA]</scope>
</reference>
<gene>
    <name type="ordered locus">67R</name>
    <name type="ORF">I8R</name>
</gene>
<protein>
    <recommendedName>
        <fullName>Probable host range protein 2</fullName>
    </recommendedName>
</protein>
<organism>
    <name type="scientific">Yaba monkey tumor virus (strain VR587)</name>
    <name type="common">YMTV</name>
    <dbReference type="NCBI Taxonomy" id="928314"/>
    <lineage>
        <taxon>Viruses</taxon>
        <taxon>Varidnaviria</taxon>
        <taxon>Bamfordvirae</taxon>
        <taxon>Nucleocytoviricota</taxon>
        <taxon>Pokkesviricetes</taxon>
        <taxon>Chitovirales</taxon>
        <taxon>Poxviridae</taxon>
        <taxon>Chordopoxvirinae</taxon>
        <taxon>Yatapoxvirus</taxon>
        <taxon>Yaba monkey tumor virus</taxon>
    </lineage>
</organism>
<name>VHR2_YMTV5</name>
<comment type="function">
    <text evidence="1">Plays a role for multiplication of the virus in different cell types.</text>
</comment>
<comment type="similarity">
    <text evidence="2">Belongs to the poxviridae C7 protein family.</text>
</comment>
<organismHost>
    <name type="scientific">Erythrocebus patas</name>
    <name type="common">Red guenon</name>
    <name type="synonym">Cercopithecus patas</name>
    <dbReference type="NCBI Taxonomy" id="9538"/>
</organismHost>
<organismHost>
    <name type="scientific">Homo sapiens</name>
    <name type="common">Human</name>
    <dbReference type="NCBI Taxonomy" id="9606"/>
</organismHost>
<organismHost>
    <name type="scientific">Macaca</name>
    <name type="common">macaques</name>
    <dbReference type="NCBI Taxonomy" id="9539"/>
</organismHost>
<organismHost>
    <name type="scientific">Papio hamadryas</name>
    <name type="common">Hamadryas baboon</name>
    <dbReference type="NCBI Taxonomy" id="9557"/>
</organismHost>
<accession>Q9QBB4</accession>
<keyword id="KW-1185">Reference proteome</keyword>
<evidence type="ECO:0000250" key="1"/>
<evidence type="ECO:0000305" key="2"/>
<sequence>MGITHELDIFVTNEDLALKNIELFKGNSYGCFINLKVKEEKRFNMIFVLRPDWSEIDSVKPIRMTVNNNHVDVEKVSESIHEVVYSASFLISFNSLVKVFSDDPDKYKNVYPTVTINVPKKKFKVVDQGNTYMFIQYPIDDCDKERFLKDEFKYCDNEYDQYNDCDE</sequence>
<dbReference type="EMBL" id="AY386371">
    <property type="protein sequence ID" value="AAR07423.1"/>
    <property type="molecule type" value="Genomic_DNA"/>
</dbReference>
<dbReference type="RefSeq" id="NP_938322.1">
    <property type="nucleotide sequence ID" value="NC_005179.1"/>
</dbReference>
<dbReference type="SMR" id="Q9QBB4"/>
<dbReference type="KEGG" id="vg:2943617"/>
<dbReference type="Proteomes" id="UP000008596">
    <property type="component" value="Segment"/>
</dbReference>
<dbReference type="GO" id="GO:0016032">
    <property type="term" value="P:viral process"/>
    <property type="evidence" value="ECO:0007669"/>
    <property type="project" value="InterPro"/>
</dbReference>
<dbReference type="InterPro" id="IPR004967">
    <property type="entry name" value="Poxvirus_C7/F8A"/>
</dbReference>
<dbReference type="Pfam" id="PF03287">
    <property type="entry name" value="Pox_C7_F8A"/>
    <property type="match status" value="1"/>
</dbReference>
<dbReference type="PIRSF" id="PIRSF003779">
    <property type="entry name" value="VAC_C7L"/>
    <property type="match status" value="1"/>
</dbReference>
<feature type="chain" id="PRO_0000099404" description="Probable host range protein 2">
    <location>
        <begin position="1"/>
        <end position="167"/>
    </location>
</feature>